<organism>
    <name type="scientific">Monascus ruber</name>
    <name type="common">Mold</name>
    <dbReference type="NCBI Taxonomy" id="89489"/>
    <lineage>
        <taxon>Eukaryota</taxon>
        <taxon>Fungi</taxon>
        <taxon>Dikarya</taxon>
        <taxon>Ascomycota</taxon>
        <taxon>Pezizomycotina</taxon>
        <taxon>Eurotiomycetes</taxon>
        <taxon>Eurotiomycetidae</taxon>
        <taxon>Eurotiales</taxon>
        <taxon>Aspergillaceae</taxon>
        <taxon>Monascus</taxon>
    </lineage>
</organism>
<sequence length="273" mass="29810">MPANRSSDDSTLHLPRILCLHGGGTNARIFRAQCRILTRYLSTAFRLCFAEAPFLSQPGPDVTSVYKEFGPFKRWLRSSARDHPEIDPALATEAIDASLRDAMDEDDRRGATGEWAGLLGFSQGAKMCASLLLRQQVRDATRTSPSARDGPNWRFAVLLAGRGPLVSLDPACLTSPAVVDAGGIAMTAFPDERLLAAGTAHVLRLPTVHVHGMLDPGLEEHRKLLAQYCEEGTARVMEWEGNHRVPIKTKDVVALVGHVLEVATETGVLQRRI</sequence>
<reference key="1">
    <citation type="submission" date="2016-05" db="EMBL/GenBank/DDBJ databases">
        <title>The biosynthetic steps of Monascus azahpilone pigments in fungi.</title>
        <authorList>
            <person name="Chen W."/>
            <person name="Chen F."/>
        </authorList>
    </citation>
    <scope>NUCLEOTIDE SEQUENCE [MRNA]</scope>
    <source>
        <strain>M7</strain>
    </source>
</reference>
<reference key="2">
    <citation type="submission" date="2019-04" db="EMBL/GenBank/DDBJ databases">
        <authorList>
            <person name="Guo X."/>
            <person name="Chen M."/>
            <person name="Ma X."/>
        </authorList>
    </citation>
    <scope>NUCLEOTIDE SEQUENCE [GENOMIC DNA]</scope>
    <source>
        <strain>CGMCC 3.19587</strain>
    </source>
</reference>
<reference key="3">
    <citation type="journal article" date="1977" name="Plant Physiol.">
        <title>Pigmentation and antibacterial activity of fast neutron- and X-ray-induced strains of Monascus purpureus went.</title>
        <authorList>
            <person name="Wong H.C."/>
            <person name="Bau Y.S."/>
        </authorList>
    </citation>
    <scope>BIOTECHNOLOGY</scope>
</reference>
<reference key="4">
    <citation type="journal article" date="2005" name="Chem. Biodivers.">
        <title>Anti-tumor-initiating effects of monascin, an azaphilonoid pigment from the extract of Monascus pilosus fermented rice (red-mold rice).</title>
        <authorList>
            <person name="Akihisa T."/>
            <person name="Tokuda H."/>
            <person name="Ukiya M."/>
            <person name="Kiyota A."/>
            <person name="Yasukawa K."/>
            <person name="Sakamoto N."/>
            <person name="Kimura Y."/>
            <person name="Suzuki T."/>
            <person name="Takayasu J."/>
            <person name="Nishino H."/>
        </authorList>
    </citation>
    <scope>BIOTECHNOLOGY</scope>
</reference>
<reference key="5">
    <citation type="journal article" date="2006" name="Appl. Microbiol. Biotechnol.">
        <title>In vivo hypolipidemic effects and safety of low dosage Monascus powder in a hamster model of hyperlipidemia.</title>
        <authorList>
            <person name="Lee C.L."/>
            <person name="Tsai T.Y."/>
            <person name="Wang J.J."/>
            <person name="Pan T.M."/>
        </authorList>
    </citation>
    <scope>BIOTECHNOLOGY</scope>
</reference>
<reference key="6">
    <citation type="journal article" date="2010" name="J. Agric. Food Chem.">
        <title>Monascin and ankaflavin act as novel hypolipidemic and high-density lipoprotein cholesterol-raising agents in red mold dioscorea.</title>
        <authorList>
            <person name="Lee C.L."/>
            <person name="Kung Y.H."/>
            <person name="Wu C.L."/>
            <person name="Hsu Y.W."/>
            <person name="Pan T.M."/>
        </authorList>
    </citation>
    <scope>BIOTECHNOLOGY</scope>
</reference>
<reference key="7">
    <citation type="journal article" date="2012" name="Appl. Microbiol. Biotechnol.">
        <title>Development of Monascus fermentation technology for high hypolipidemic effect.</title>
        <authorList>
            <person name="Lee C.L."/>
            <person name="Pan T.M."/>
        </authorList>
    </citation>
    <scope>BIOTECHNOLOGY</scope>
</reference>
<reference key="8">
    <citation type="journal article" date="2016" name="Appl. Microbiol. Biotechnol.">
        <title>Identification and role analysis of an intermediate produced by a polygenic mutant of Monascus pigments cluster in Monascus ruber M7.</title>
        <authorList>
            <person name="Liu J."/>
            <person name="Zhou Y."/>
            <person name="Yi T."/>
            <person name="Zhao M."/>
            <person name="Xie N."/>
            <person name="Lei M."/>
            <person name="Liu Q."/>
            <person name="Shao Y."/>
            <person name="Chen F."/>
        </authorList>
    </citation>
    <scope>FUNCTION</scope>
    <scope>PATHWAY</scope>
</reference>
<reference key="9">
    <citation type="journal article" date="2017" name="Chem. Sci.">
        <title>Orange, red, yellow: biosynthesis of azaphilone pigments in Monascus fungi.</title>
        <authorList>
            <person name="Chen W."/>
            <person name="Chen R."/>
            <person name="Liu Q."/>
            <person name="He Y."/>
            <person name="He K."/>
            <person name="Ding X."/>
            <person name="Kang L."/>
            <person name="Guo X."/>
            <person name="Xie N."/>
            <person name="Zhou Y."/>
            <person name="Lu Y."/>
            <person name="Cox R.J."/>
            <person name="Molnar I."/>
            <person name="Li M."/>
            <person name="Shao Y."/>
            <person name="Chen F."/>
        </authorList>
    </citation>
    <scope>FUNCTION</scope>
    <scope>PATHWAY</scope>
</reference>
<reference key="10">
    <citation type="journal article" date="2021" name="Front. Microbiol.">
        <title>An integrated approach to determine the boundaries of the azaphilone pigment biosynthetic gene cluster of Monascus ruber M7 gown on potato dextrose agar.</title>
        <authorList>
            <person name="Liu Q."/>
            <person name="Zhong S."/>
            <person name="Wang X."/>
            <person name="Gao S."/>
            <person name="Yang X."/>
            <person name="Chen F."/>
            <person name="Molnar I."/>
        </authorList>
    </citation>
    <scope>FUNCTION</scope>
    <scope>INDUCTION</scope>
</reference>
<reference key="11">
    <citation type="journal article" date="2023" name="Food Res. Intern.">
        <title>Improved natural food colorant production in the filamentous fungus Monascus ruber using CRISPR-based engineering.</title>
        <authorList>
            <person name="Ree Yoon H."/>
            <person name="Han S."/>
            <person name="Chul Shin S."/>
            <person name="Cheong Yeom S."/>
            <person name="Jin Kim H."/>
        </authorList>
    </citation>
    <scope>BIOTECHNOLOGY</scope>
</reference>
<proteinExistence type="evidence at protein level"/>
<keyword id="KW-0378">Hydrolase</keyword>
<keyword id="KW-0608">Pigment</keyword>
<name>PIGG_MONRU</name>
<dbReference type="EC" id="3.1.2.-" evidence="13"/>
<dbReference type="EMBL" id="KX278307">
    <property type="protein sequence ID" value="APZ73942.1"/>
    <property type="molecule type" value="mRNA"/>
</dbReference>
<dbReference type="EMBL" id="MK764691">
    <property type="protein sequence ID" value="QGA67187.1"/>
    <property type="molecule type" value="Genomic_DNA"/>
</dbReference>
<dbReference type="SMR" id="A0A1P8VFN0"/>
<dbReference type="GO" id="GO:0005737">
    <property type="term" value="C:cytoplasm"/>
    <property type="evidence" value="ECO:0007669"/>
    <property type="project" value="TreeGrafter"/>
</dbReference>
<dbReference type="GO" id="GO:0005634">
    <property type="term" value="C:nucleus"/>
    <property type="evidence" value="ECO:0007669"/>
    <property type="project" value="TreeGrafter"/>
</dbReference>
<dbReference type="GO" id="GO:0016787">
    <property type="term" value="F:hydrolase activity"/>
    <property type="evidence" value="ECO:0007669"/>
    <property type="project" value="UniProtKB-KW"/>
</dbReference>
<dbReference type="GO" id="GO:0031409">
    <property type="term" value="F:pigment binding"/>
    <property type="evidence" value="ECO:0007669"/>
    <property type="project" value="UniProtKB-KW"/>
</dbReference>
<dbReference type="GO" id="GO:0044550">
    <property type="term" value="P:secondary metabolite biosynthetic process"/>
    <property type="evidence" value="ECO:0007669"/>
    <property type="project" value="TreeGrafter"/>
</dbReference>
<dbReference type="Gene3D" id="3.40.50.1820">
    <property type="entry name" value="alpha/beta hydrolase"/>
    <property type="match status" value="1"/>
</dbReference>
<dbReference type="InterPro" id="IPR029058">
    <property type="entry name" value="AB_hydrolase_fold"/>
</dbReference>
<dbReference type="InterPro" id="IPR005645">
    <property type="entry name" value="FSH-like_dom"/>
</dbReference>
<dbReference type="InterPro" id="IPR050593">
    <property type="entry name" value="LovG"/>
</dbReference>
<dbReference type="PANTHER" id="PTHR48070:SF3">
    <property type="entry name" value="ESTERASE DBAE-RELATED"/>
    <property type="match status" value="1"/>
</dbReference>
<dbReference type="PANTHER" id="PTHR48070">
    <property type="entry name" value="ESTERASE OVCA2"/>
    <property type="match status" value="1"/>
</dbReference>
<dbReference type="Pfam" id="PF03959">
    <property type="entry name" value="FSH1"/>
    <property type="match status" value="1"/>
</dbReference>
<dbReference type="SUPFAM" id="SSF53474">
    <property type="entry name" value="alpha/beta-Hydrolases"/>
    <property type="match status" value="1"/>
</dbReference>
<evidence type="ECO:0000250" key="1">
    <source>
        <dbReference type="UniProtKB" id="P38777"/>
    </source>
</evidence>
<evidence type="ECO:0000269" key="2">
    <source>
    </source>
</evidence>
<evidence type="ECO:0000269" key="3">
    <source>
    </source>
</evidence>
<evidence type="ECO:0000269" key="4">
    <source>
    </source>
</evidence>
<evidence type="ECO:0000269" key="5">
    <source>
    </source>
</evidence>
<evidence type="ECO:0000269" key="6">
    <source>
    </source>
</evidence>
<evidence type="ECO:0000269" key="7">
    <source>
    </source>
</evidence>
<evidence type="ECO:0000269" key="8">
    <source>
    </source>
</evidence>
<evidence type="ECO:0000269" key="9">
    <source>
    </source>
</evidence>
<evidence type="ECO:0000269" key="10">
    <source>
    </source>
</evidence>
<evidence type="ECO:0000303" key="11">
    <source>
    </source>
</evidence>
<evidence type="ECO:0000305" key="12"/>
<evidence type="ECO:0000305" key="13">
    <source>
    </source>
</evidence>
<gene>
    <name evidence="11" type="primary">pigG</name>
</gene>
<comment type="function">
    <text evidence="7 8 9">Esterase; part of the gene cluster that mediates the biosynthesis of azaphilone pigments (MonAzPs), a complex mixture of compounds with a common azaphilone skeleton very widely used as food colorants (PubMed:26946170, PubMed:28959415, PubMed:34220766). Within the pathway, pigG may assist the nrPKS pigA in the biosynthesis of the hexaketide precursor (PubMed:28959415). The first step of the pathway is performed by the nrPKS pigA that forms the hexaketide precursor from successive condensations of five malonyl-CoA units, with a simple acetyl-CoA starter unit. The role of esterase pigG is not clear, but it may play at most a supplementary role in the formation of the benzaldehyde produced by the pigA nrPKS. This very reactive benzaldehyde is intercepted by the pigC ketoreductase that to provide the first stable enzyme-free MonAzPs intermediate, 6-(4-hydroxy-2-oxopentyl)-3-methyl-2,4-dioxocyclohexane carbaldehyde, also known as M7PKS-1. The FAD-dependent monooxygenase pigN hydroxylates M7PKS-1 at C-4, which triggers the formation of the pyran ring. PigJ, pigK and pigD are involved in the acetylation of the pyran ring. PigJ and pigK form the two subunits of a dedicated fungal FAS that produces the side chain fatty acyl moiety of MonAzPs and pigD transfers the fatty acyl chain to the C-4 alcohol. PigM and pigO are involved in the elimination of the omega-1 alcohol. PigM acts as an O-acetyltransferase that synthesizes the putative O-11 acetyl intermediate whereas pigO eliminates acetic acid to yield an intermediate with a C10(11) double bond. The dehydration of the C-11 alcohol followed by the reduction of the C6(7) double bond by the NAD(P)H-dependent oxidoreductase pigE increases the electrophilicity of the C-5 ketone of the resulting acyl benzopyran. This in turn sets up the C-5 ketone for an intramolecular Knoevenagel aldol condensation with the C-20 enol of the side chain. This condensation affords the characteristic linear tricyclic carbon skeletons of the yellow pigments that serve as the common precursors for the classical yellow pigments monascin and ankaflavin, orange pigments rubopunctatin and monascorubrin, and red pigments ribropunctamine and monascorubramine. The FAD-dependent oxidoreductase pigF is especially invoved in the biosynthesis of orange and red pigments via desaturation of C6(7) (PubMed:28959415).</text>
</comment>
<comment type="pathway">
    <text evidence="7 8">Secondary metabolite biosynthesis.</text>
</comment>
<comment type="induction">
    <text evidence="9">Expression is positively regulated by the azaphilone pigments (MonAzPs) gene cluster-specific transcription regulator pigB.</text>
</comment>
<comment type="biotechnology">
    <text evidence="2 3 4 5 6 10">As colorants, MonAzPs are widely used in various food products for centuries (PubMed:37087240). Moreover, MonAzPs also possess wide-ranging biological activities such as antibacterial activity, preventing hypertension, lowering cholesterol levels, causing hypolipidemic effects, and displaying antiobesity and antitumor activities (PubMed:16283302, PubMed:16660141, PubMed:17191930, PubMed:20666456, PubMed:22562164).</text>
</comment>
<comment type="similarity">
    <text evidence="12">Belongs to the LovG family.</text>
</comment>
<accession>A0A1P8VFN0</accession>
<feature type="chain" id="PRO_0000460214" description="Esterase pigG">
    <location>
        <begin position="1"/>
        <end position="273"/>
    </location>
</feature>
<feature type="active site" description="Charge relay system" evidence="1">
    <location>
        <position position="122"/>
    </location>
</feature>
<feature type="active site" description="Charge relay system" evidence="1">
    <location>
        <position position="215"/>
    </location>
</feature>
<feature type="active site" description="Charge relay system" evidence="1">
    <location>
        <position position="243"/>
    </location>
</feature>
<protein>
    <recommendedName>
        <fullName evidence="11">Esterase pigG</fullName>
        <ecNumber evidence="13">3.1.2.-</ecNumber>
    </recommendedName>
    <alternativeName>
        <fullName evidence="11">Azaphilone pigments biosynthesis cluster protein G</fullName>
    </alternativeName>
</protein>